<feature type="chain" id="PRO_0000437893" description="Non-reducing polyketide synthase nscA">
    <location>
        <begin position="1"/>
        <end position="1819"/>
    </location>
</feature>
<feature type="domain" description="Ketosynthase family 3 (KS3)" evidence="7">
    <location>
        <begin position="413"/>
        <end position="846"/>
    </location>
</feature>
<feature type="domain" description="PKS/mFAS DH" evidence="8">
    <location>
        <begin position="1343"/>
        <end position="1653"/>
    </location>
</feature>
<feature type="domain" description="Carrier" evidence="6">
    <location>
        <begin position="1742"/>
        <end position="1819"/>
    </location>
</feature>
<feature type="region of interest" description="N-terminal acylcarrier protein transacylase domain (SAT)" evidence="5">
    <location>
        <begin position="25"/>
        <end position="277"/>
    </location>
</feature>
<feature type="region of interest" description="Malonyl-CoA:ACP transacylase (MAT) domain" evidence="5">
    <location>
        <begin position="952"/>
        <end position="1249"/>
    </location>
</feature>
<feature type="region of interest" description="Product template (PT) domain" evidence="5">
    <location>
        <begin position="1339"/>
        <end position="1658"/>
    </location>
</feature>
<feature type="region of interest" description="N-terminal hotdog fold" evidence="8">
    <location>
        <begin position="1343"/>
        <end position="1479"/>
    </location>
</feature>
<feature type="region of interest" description="C-terminal hotdog fold" evidence="8">
    <location>
        <begin position="1507"/>
        <end position="1653"/>
    </location>
</feature>
<feature type="region of interest" description="Disordered" evidence="9">
    <location>
        <begin position="1703"/>
        <end position="1742"/>
    </location>
</feature>
<feature type="compositionally biased region" description="Low complexity" evidence="9">
    <location>
        <begin position="1719"/>
        <end position="1730"/>
    </location>
</feature>
<feature type="active site" description="For beta-ketoacyl synthase activity" evidence="7">
    <location>
        <position position="586"/>
    </location>
</feature>
<feature type="active site" description="For beta-ketoacyl synthase activity" evidence="7">
    <location>
        <position position="721"/>
    </location>
</feature>
<feature type="active site" description="For beta-ketoacyl synthase activity" evidence="7">
    <location>
        <position position="764"/>
    </location>
</feature>
<feature type="active site" description="Proton acceptor; for dehydratase activity" evidence="8">
    <location>
        <position position="1375"/>
    </location>
</feature>
<feature type="active site" description="Proton donor; for dehydratase activity" evidence="8">
    <location>
        <position position="1564"/>
    </location>
</feature>
<feature type="modified residue" description="O-(pantetheine 4'-phosphoryl)serine" evidence="6">
    <location>
        <position position="1779"/>
    </location>
</feature>
<keyword id="KW-0012">Acyltransferase</keyword>
<keyword id="KW-0511">Multifunctional enzyme</keyword>
<keyword id="KW-0596">Phosphopantetheine</keyword>
<keyword id="KW-0597">Phosphoprotein</keyword>
<keyword id="KW-0808">Transferase</keyword>
<accession>D4CZZ2</accession>
<sequence>MDSTSRRVVFFSNEFPNDDLKELFRRLDQHSKDRRFRLLSIFLEESTAVLKDEVSKLPRPLKELVPPFDSVLGLVDVDFRQGPLGAAMESSMLTILELGLFIGYVSLLCLLDQVKMLTSLVYTSHYESEDTEWDLVPGESVLAGLSIGILAAAAVALSSSLADVAKTGAEAVRVSFRLGVYVADISTKLETPQSDGTLSSWAHVVTEMTEAGVQDELRQFNTDTHSPELTKVFISAADKTSVSVSGPPSRIKAAFQHSPVLRYSKSLPLPVYDGLCHASHLYTQSDIDSIINSAESVIVADRSVRLALLSSQTGKPFIAKTASELFLEIGTELLTGTIYLDNVTAGIVQHLQPQSKEISSWQIDSFRTSLVLRGIHSAVEAKLSGEQRQLIRRDLVNWVNKDFGPRQPRSHASSKLAIVGMACRLPGGANDLDLFWKLLEEGRDTLTTVPPDRFDLNTHYDPTGKTENATQTPYGNFIDRPGFFDAGFFNMSPREAEQTDPMQRLALVTAYEALEMAGVVPGRTPSTHPSRIGTFYGQASDDWRELNASQNISTYAVPGGERAFGNGRINYFFKFSGPSFNLDTACSSGLAAVQAACSALWAGEVDTAIAGGLNVITDPDNYCGLGNAHFLSKTGQCKVWDKDADGYCRADGIGSVVIKRLEDAEADNDNILAVVLGASTNHSAEAISITHPHAGAQKANYRQVLNQAGVNPIDVSYIELHGTGTQAGDAVESESVSDIFAPVTPRRRPDQRLYLGAVKSNIGHGEAAAGIASLLKALLVYQKNLIPMHIGIKSVINPTIPKDLERRNVGLAMQNTPWPRPAGKKRLAVVNSFGAHGGNTTLLLEDAPERVKIQGTEDRITHSILLSAKSKKSLQANMESLLSYLDQHPETSLADLAYTTSSRRMHHNMRFGTSVSCISGLQKVLRSQLDNVNFASEVRPVPNEAPSVILAFTSQGAYYHGMGRELFAEFPYFRAQVQQLDRLAQRLGFPSVVPVIENSIEDTPSSPILTQLSVVILEIALARFWSLLGVSISAVIGHSLGEYAALAVAGVISATDAIYLVGRRAQLVEERCAQGSHSMLSVRAPEDEIQKMLAAEPETASIAYEVSCCNTNQDTVIGGLTGEINDIRRTLEAKSIKCTILDVPYAFHTAQVNPILDDLETLAKAVPFKAPSIPVISPLLATVIYDVKSLNANYLRRATRETVDFAAAIEAAQDMGLVDSKTIWIDVGPHPICAGLVRSMIPSAPAMSSCRRNEDSIATISKSLVTLYLAGINPCWAEFFKPREREYSLLHLPKYRWNEIDYWIPYLGTWTLDKAHLKHGTKPTTPFSVSMSRPSALRTSLVHQITAETVEATTATLHTISDMQHPDFLEAIHGHTMNKCGVATSSIWSDMAFTVGEYLYRRLVPNTKDVHMNLTDVEVLHAQVASKTKGSVQPLVLRAHLDLSTSSMSLSWFNANGETGECAAESFATAMIRFEDPMAWRKEWARLAHLVRGRIEVLEQRASEGKASRLSKPLAYALFKNVVDYADRYRGMDSVVLDELEAMAEVTLVPERYGTWHTPPHWIDSVSHLAGLVMNGSDASNTRDYFFVTPGCDSFRLLKKLEPGAQYRSYVRMFPLPEDPNMHGGDVYILQGEEIVGMVGMIRIRRVPRLLMDRFFSPPTTTSVAGPVPPLSGETTKYHDIAQTAPALPAPTLPIVVPNPVASSTMASKAPEPAPLLATSSESSTPKESPIVTPAESEREDPVDNNMISQCLRLMARETGLEVEALTADASFVQLGVDSLMSLVLSEKFRAELGVEIKSSLFLECPTIGEMTAWIEEYC</sequence>
<dbReference type="EC" id="2.3.1.-" evidence="11"/>
<dbReference type="EMBL" id="ACYE01000020">
    <property type="protein sequence ID" value="EFE44835.1"/>
    <property type="molecule type" value="Genomic_DNA"/>
</dbReference>
<dbReference type="RefSeq" id="XP_003025446.1">
    <property type="nucleotide sequence ID" value="XM_003025400.1"/>
</dbReference>
<dbReference type="SMR" id="D4CZZ2"/>
<dbReference type="GeneID" id="9581672"/>
<dbReference type="KEGG" id="tve:TRV_00386"/>
<dbReference type="HOGENOM" id="CLU_000022_6_1_1"/>
<dbReference type="OrthoDB" id="2891at34384"/>
<dbReference type="Proteomes" id="UP000008383">
    <property type="component" value="Unassembled WGS sequence"/>
</dbReference>
<dbReference type="GO" id="GO:0004315">
    <property type="term" value="F:3-oxoacyl-[acyl-carrier-protein] synthase activity"/>
    <property type="evidence" value="ECO:0007669"/>
    <property type="project" value="InterPro"/>
</dbReference>
<dbReference type="GO" id="GO:0004312">
    <property type="term" value="F:fatty acid synthase activity"/>
    <property type="evidence" value="ECO:0007669"/>
    <property type="project" value="TreeGrafter"/>
</dbReference>
<dbReference type="GO" id="GO:0031177">
    <property type="term" value="F:phosphopantetheine binding"/>
    <property type="evidence" value="ECO:0007669"/>
    <property type="project" value="InterPro"/>
</dbReference>
<dbReference type="GO" id="GO:0006633">
    <property type="term" value="P:fatty acid biosynthetic process"/>
    <property type="evidence" value="ECO:0007669"/>
    <property type="project" value="InterPro"/>
</dbReference>
<dbReference type="GO" id="GO:0044550">
    <property type="term" value="P:secondary metabolite biosynthetic process"/>
    <property type="evidence" value="ECO:0007669"/>
    <property type="project" value="TreeGrafter"/>
</dbReference>
<dbReference type="CDD" id="cd00833">
    <property type="entry name" value="PKS"/>
    <property type="match status" value="1"/>
</dbReference>
<dbReference type="FunFam" id="3.40.366.10:FF:000002">
    <property type="entry name" value="Probable polyketide synthase 2"/>
    <property type="match status" value="1"/>
</dbReference>
<dbReference type="FunFam" id="1.10.1200.10:FF:000011">
    <property type="entry name" value="Sterigmatocystin biosynthesis polyketide synthase"/>
    <property type="match status" value="1"/>
</dbReference>
<dbReference type="FunFam" id="3.10.129.110:FF:000001">
    <property type="entry name" value="Sterigmatocystin biosynthesis polyketide synthase"/>
    <property type="match status" value="1"/>
</dbReference>
<dbReference type="FunFam" id="3.40.47.10:FF:000031">
    <property type="entry name" value="Sterigmatocystin biosynthesis polyketide synthase"/>
    <property type="match status" value="1"/>
</dbReference>
<dbReference type="Gene3D" id="3.30.70.3290">
    <property type="match status" value="1"/>
</dbReference>
<dbReference type="Gene3D" id="3.40.47.10">
    <property type="match status" value="1"/>
</dbReference>
<dbReference type="Gene3D" id="1.10.1200.10">
    <property type="entry name" value="ACP-like"/>
    <property type="match status" value="1"/>
</dbReference>
<dbReference type="Gene3D" id="3.40.366.10">
    <property type="entry name" value="Malonyl-Coenzyme A Acyl Carrier Protein, domain 2"/>
    <property type="match status" value="2"/>
</dbReference>
<dbReference type="Gene3D" id="3.10.129.110">
    <property type="entry name" value="Polyketide synthase dehydratase"/>
    <property type="match status" value="1"/>
</dbReference>
<dbReference type="InterPro" id="IPR001227">
    <property type="entry name" value="Ac_transferase_dom_sf"/>
</dbReference>
<dbReference type="InterPro" id="IPR036736">
    <property type="entry name" value="ACP-like_sf"/>
</dbReference>
<dbReference type="InterPro" id="IPR014043">
    <property type="entry name" value="Acyl_transferase_dom"/>
</dbReference>
<dbReference type="InterPro" id="IPR016035">
    <property type="entry name" value="Acyl_Trfase/lysoPLipase"/>
</dbReference>
<dbReference type="InterPro" id="IPR018201">
    <property type="entry name" value="Ketoacyl_synth_AS"/>
</dbReference>
<dbReference type="InterPro" id="IPR014031">
    <property type="entry name" value="Ketoacyl_synth_C"/>
</dbReference>
<dbReference type="InterPro" id="IPR014030">
    <property type="entry name" value="Ketoacyl_synth_N"/>
</dbReference>
<dbReference type="InterPro" id="IPR020841">
    <property type="entry name" value="PKS_Beta-ketoAc_synthase_dom"/>
</dbReference>
<dbReference type="InterPro" id="IPR042104">
    <property type="entry name" value="PKS_dehydratase_sf"/>
</dbReference>
<dbReference type="InterPro" id="IPR049900">
    <property type="entry name" value="PKS_mFAS_DH"/>
</dbReference>
<dbReference type="InterPro" id="IPR050091">
    <property type="entry name" value="PKS_NRPS_Biosynth_Enz"/>
</dbReference>
<dbReference type="InterPro" id="IPR020806">
    <property type="entry name" value="PKS_PP-bd"/>
</dbReference>
<dbReference type="InterPro" id="IPR009081">
    <property type="entry name" value="PP-bd_ACP"/>
</dbReference>
<dbReference type="InterPro" id="IPR030918">
    <property type="entry name" value="PT_fungal_PKS"/>
</dbReference>
<dbReference type="InterPro" id="IPR032088">
    <property type="entry name" value="SAT"/>
</dbReference>
<dbReference type="InterPro" id="IPR016039">
    <property type="entry name" value="Thiolase-like"/>
</dbReference>
<dbReference type="NCBIfam" id="TIGR04532">
    <property type="entry name" value="PT_fungal_PKS"/>
    <property type="match status" value="1"/>
</dbReference>
<dbReference type="PANTHER" id="PTHR43775">
    <property type="entry name" value="FATTY ACID SYNTHASE"/>
    <property type="match status" value="1"/>
</dbReference>
<dbReference type="PANTHER" id="PTHR43775:SF24">
    <property type="entry name" value="NON-REDUCING POLYKETIDE SYNTHASE APTA-RELATED"/>
    <property type="match status" value="1"/>
</dbReference>
<dbReference type="Pfam" id="PF00698">
    <property type="entry name" value="Acyl_transf_1"/>
    <property type="match status" value="1"/>
</dbReference>
<dbReference type="Pfam" id="PF22621">
    <property type="entry name" value="CurL-like_PKS_C"/>
    <property type="match status" value="1"/>
</dbReference>
<dbReference type="Pfam" id="PF00109">
    <property type="entry name" value="ketoacyl-synt"/>
    <property type="match status" value="1"/>
</dbReference>
<dbReference type="Pfam" id="PF02801">
    <property type="entry name" value="Ketoacyl-synt_C"/>
    <property type="match status" value="1"/>
</dbReference>
<dbReference type="Pfam" id="PF00550">
    <property type="entry name" value="PP-binding"/>
    <property type="match status" value="1"/>
</dbReference>
<dbReference type="Pfam" id="PF16073">
    <property type="entry name" value="SAT"/>
    <property type="match status" value="1"/>
</dbReference>
<dbReference type="SMART" id="SM00827">
    <property type="entry name" value="PKS_AT"/>
    <property type="match status" value="1"/>
</dbReference>
<dbReference type="SMART" id="SM00825">
    <property type="entry name" value="PKS_KS"/>
    <property type="match status" value="1"/>
</dbReference>
<dbReference type="SMART" id="SM00823">
    <property type="entry name" value="PKS_PP"/>
    <property type="match status" value="1"/>
</dbReference>
<dbReference type="SUPFAM" id="SSF47336">
    <property type="entry name" value="ACP-like"/>
    <property type="match status" value="1"/>
</dbReference>
<dbReference type="SUPFAM" id="SSF52151">
    <property type="entry name" value="FabD/lysophospholipase-like"/>
    <property type="match status" value="1"/>
</dbReference>
<dbReference type="SUPFAM" id="SSF53901">
    <property type="entry name" value="Thiolase-like"/>
    <property type="match status" value="1"/>
</dbReference>
<dbReference type="PROSITE" id="PS50075">
    <property type="entry name" value="CARRIER"/>
    <property type="match status" value="1"/>
</dbReference>
<dbReference type="PROSITE" id="PS00606">
    <property type="entry name" value="KS3_1"/>
    <property type="match status" value="1"/>
</dbReference>
<dbReference type="PROSITE" id="PS52004">
    <property type="entry name" value="KS3_2"/>
    <property type="match status" value="1"/>
</dbReference>
<dbReference type="PROSITE" id="PS52019">
    <property type="entry name" value="PKS_MFAS_DH"/>
    <property type="match status" value="1"/>
</dbReference>
<reference key="1">
    <citation type="journal article" date="2011" name="Genome Biol.">
        <title>Comparative and functional genomics provide insights into the pathogenicity of dermatophytic fungi.</title>
        <authorList>
            <person name="Burmester A."/>
            <person name="Shelest E."/>
            <person name="Gloeckner G."/>
            <person name="Heddergott C."/>
            <person name="Schindler S."/>
            <person name="Staib P."/>
            <person name="Heidel A."/>
            <person name="Felder M."/>
            <person name="Petzold A."/>
            <person name="Szafranski K."/>
            <person name="Feuermann M."/>
            <person name="Pedruzzi I."/>
            <person name="Priebe S."/>
            <person name="Groth M."/>
            <person name="Winkler R."/>
            <person name="Li W."/>
            <person name="Kniemeyer O."/>
            <person name="Schroeckh V."/>
            <person name="Hertweck C."/>
            <person name="Hube B."/>
            <person name="White T.C."/>
            <person name="Platzer M."/>
            <person name="Guthke R."/>
            <person name="Heitman J."/>
            <person name="Woestemeyer J."/>
            <person name="Zipfel P.F."/>
            <person name="Monod M."/>
            <person name="Brakhage A.A."/>
        </authorList>
    </citation>
    <scope>NUCLEOTIDE SEQUENCE [LARGE SCALE GENOMIC DNA]</scope>
    <source>
        <strain>HKI 0517</strain>
    </source>
</reference>
<reference key="2">
    <citation type="journal article" date="2013" name="ACS Synth. Biol.">
        <title>Discovery of cryptic polyketide metabolites from dermatophytes using heterologous expression in Aspergillus nidulans.</title>
        <authorList>
            <person name="Yin W.B."/>
            <person name="Chooi Y.H."/>
            <person name="Smith A.R."/>
            <person name="Cacho R.A."/>
            <person name="Hu Y."/>
            <person name="White T.C."/>
            <person name="Tang Y."/>
        </authorList>
    </citation>
    <scope>FUNCTION</scope>
</reference>
<gene>
    <name evidence="10" type="primary">nscA</name>
    <name type="ORF">TRV_00386</name>
</gene>
<evidence type="ECO:0000250" key="1">
    <source>
        <dbReference type="UniProtKB" id="A0A0K0MCJ4"/>
    </source>
</evidence>
<evidence type="ECO:0000250" key="2">
    <source>
        <dbReference type="UniProtKB" id="A1D8I9"/>
    </source>
</evidence>
<evidence type="ECO:0000250" key="3">
    <source>
        <dbReference type="UniProtKB" id="F2S6Z9"/>
    </source>
</evidence>
<evidence type="ECO:0000250" key="4">
    <source>
        <dbReference type="UniProtKB" id="Q5B0D0"/>
    </source>
</evidence>
<evidence type="ECO:0000255" key="5"/>
<evidence type="ECO:0000255" key="6">
    <source>
        <dbReference type="PROSITE-ProRule" id="PRU00258"/>
    </source>
</evidence>
<evidence type="ECO:0000255" key="7">
    <source>
        <dbReference type="PROSITE-ProRule" id="PRU01348"/>
    </source>
</evidence>
<evidence type="ECO:0000255" key="8">
    <source>
        <dbReference type="PROSITE-ProRule" id="PRU01363"/>
    </source>
</evidence>
<evidence type="ECO:0000256" key="9">
    <source>
        <dbReference type="SAM" id="MobiDB-lite"/>
    </source>
</evidence>
<evidence type="ECO:0000303" key="10">
    <source>
    </source>
</evidence>
<evidence type="ECO:0000305" key="11">
    <source>
    </source>
</evidence>
<protein>
    <recommendedName>
        <fullName evidence="10">Non-reducing polyketide synthase nscA</fullName>
        <ecNumber evidence="11">2.3.1.-</ecNumber>
    </recommendedName>
    <alternativeName>
        <fullName evidence="10">Conidial yellow pigment biosynthesis polyketide synthase nscA</fullName>
    </alternativeName>
    <alternativeName>
        <fullName evidence="10">Neosartoricin B biosynthesis protein A</fullName>
    </alternativeName>
</protein>
<organism>
    <name type="scientific">Trichophyton verrucosum (strain HKI 0517)</name>
    <dbReference type="NCBI Taxonomy" id="663202"/>
    <lineage>
        <taxon>Eukaryota</taxon>
        <taxon>Fungi</taxon>
        <taxon>Dikarya</taxon>
        <taxon>Ascomycota</taxon>
        <taxon>Pezizomycotina</taxon>
        <taxon>Eurotiomycetes</taxon>
        <taxon>Eurotiomycetidae</taxon>
        <taxon>Onygenales</taxon>
        <taxon>Arthrodermataceae</taxon>
        <taxon>Trichophyton</taxon>
    </lineage>
</organism>
<name>NSCA_TRIVH</name>
<comment type="function">
    <text evidence="2 3 11">Non-reducing polyketide synthase; part of the gene cluster that mediates the biosynthesis of neosartoricin B, a prenylated anthracenone that probably exhibits T-cell antiproliferative activity, suggestive of a physiological role as an immunosuppressive agent (PubMed:23758576). The non-reducing polyketide synthase nscA probably synthesizes and cyclizes the decaketide backbone (By similarity). The hydrolase nscB then mediates the product release through hydrolysis followed by spontaneous decarboxylation (By similarity). The prenyltransferase nscD catalyzes the addition of the dimethylallyl group to the aromatic C5 (By similarity). The FAD-dependent monooxygenase nscC is then responsible for the stereospecific hydroxylation at C2 (By similarity). Neosartoricin B can be converted into two additional compounds neosartoricins C and D (By similarity). Neosartoricin C is a spirocyclic compound that is cyclized through the attack of C3 hydroxyl on C14, followed by dehydration (By similarity). On the other hand, neosartoricin D is a further cyclized compound in which attack of C2 on C14 in neosartoricin C results in the formation of the acetal-containing dioxabicyclo-octanone ring (By similarity). Both of these compounds are novel and possibly represent related metabolites of the gene cluster (By similarity).</text>
</comment>
<comment type="cofactor">
    <cofactor evidence="1">
        <name>pantetheine 4'-phosphate</name>
        <dbReference type="ChEBI" id="CHEBI:47942"/>
    </cofactor>
    <text evidence="5">Binds 1 phosphopantetheine covalently.</text>
</comment>
<comment type="pathway">
    <text evidence="11">Secondary metabolite biosynthesis.</text>
</comment>
<comment type="domain">
    <text evidence="4">Multidomain protein; including a starter unit:ACP transacylase (SAT) that selects the starter unit; a ketosynthase (KS) that catalyzes repeated decarboxylative condensation to elongate the polyketide backbone; a malonyl-CoA:ACP transacylase (MAT) that selects and transfers the extender unit malonyl-CoA; a product template (PT) domain that controls the immediate cyclization regioselectivity of the reactive polyketide backbone; and an acyl-carrier protein (ACP) that serves as the tether of the growing and completed polyketide via its phosphopantetheinyl arm (By similarity).</text>
</comment>
<proteinExistence type="inferred from homology"/>